<sequence>MPLLDSFTVDHTRMAAPAVRVAKTMKTPHGDTITVFDLRFCRPNLEVMPERGIHTLEHLFAGFMRDHLNGQGVEIIDISPMGCRTGFYMSLIGVPEEQRVADAWKAAMSDVLKVTDQRKIPELNEFQCGTYHMHSLEEAQEIAKHILDHDVVVNHNEELALPKEKLQELHI</sequence>
<gene>
    <name evidence="1" type="primary">luxS</name>
    <name type="ordered locus">Spro_0848</name>
</gene>
<feature type="chain" id="PRO_1000057609" description="S-ribosylhomocysteine lyase">
    <location>
        <begin position="1"/>
        <end position="171"/>
    </location>
</feature>
<feature type="binding site" evidence="1">
    <location>
        <position position="54"/>
    </location>
    <ligand>
        <name>Fe cation</name>
        <dbReference type="ChEBI" id="CHEBI:24875"/>
    </ligand>
</feature>
<feature type="binding site" evidence="1">
    <location>
        <position position="58"/>
    </location>
    <ligand>
        <name>Fe cation</name>
        <dbReference type="ChEBI" id="CHEBI:24875"/>
    </ligand>
</feature>
<feature type="binding site" evidence="1">
    <location>
        <position position="128"/>
    </location>
    <ligand>
        <name>Fe cation</name>
        <dbReference type="ChEBI" id="CHEBI:24875"/>
    </ligand>
</feature>
<comment type="function">
    <text evidence="1">Involved in the synthesis of autoinducer 2 (AI-2) which is secreted by bacteria and is used to communicate both the cell density and the metabolic potential of the environment. The regulation of gene expression in response to changes in cell density is called quorum sensing. Catalyzes the transformation of S-ribosylhomocysteine (RHC) to homocysteine (HC) and 4,5-dihydroxy-2,3-pentadione (DPD).</text>
</comment>
<comment type="catalytic activity">
    <reaction evidence="1">
        <text>S-(5-deoxy-D-ribos-5-yl)-L-homocysteine = (S)-4,5-dihydroxypentane-2,3-dione + L-homocysteine</text>
        <dbReference type="Rhea" id="RHEA:17753"/>
        <dbReference type="ChEBI" id="CHEBI:29484"/>
        <dbReference type="ChEBI" id="CHEBI:58195"/>
        <dbReference type="ChEBI" id="CHEBI:58199"/>
        <dbReference type="EC" id="4.4.1.21"/>
    </reaction>
</comment>
<comment type="cofactor">
    <cofactor evidence="1">
        <name>Fe cation</name>
        <dbReference type="ChEBI" id="CHEBI:24875"/>
    </cofactor>
    <text evidence="1">Binds 1 Fe cation per subunit.</text>
</comment>
<comment type="subunit">
    <text evidence="1">Homodimer.</text>
</comment>
<comment type="similarity">
    <text evidence="1">Belongs to the LuxS family.</text>
</comment>
<keyword id="KW-0071">Autoinducer synthesis</keyword>
<keyword id="KW-0408">Iron</keyword>
<keyword id="KW-0456">Lyase</keyword>
<keyword id="KW-0479">Metal-binding</keyword>
<keyword id="KW-0673">Quorum sensing</keyword>
<proteinExistence type="inferred from homology"/>
<protein>
    <recommendedName>
        <fullName evidence="1">S-ribosylhomocysteine lyase</fullName>
        <ecNumber evidence="1">4.4.1.21</ecNumber>
    </recommendedName>
    <alternativeName>
        <fullName evidence="1">AI-2 synthesis protein</fullName>
    </alternativeName>
    <alternativeName>
        <fullName evidence="1">Autoinducer-2 production protein LuxS</fullName>
    </alternativeName>
</protein>
<reference key="1">
    <citation type="submission" date="2007-09" db="EMBL/GenBank/DDBJ databases">
        <title>Complete sequence of chromosome of Serratia proteamaculans 568.</title>
        <authorList>
            <consortium name="US DOE Joint Genome Institute"/>
            <person name="Copeland A."/>
            <person name="Lucas S."/>
            <person name="Lapidus A."/>
            <person name="Barry K."/>
            <person name="Glavina del Rio T."/>
            <person name="Dalin E."/>
            <person name="Tice H."/>
            <person name="Pitluck S."/>
            <person name="Chain P."/>
            <person name="Malfatti S."/>
            <person name="Shin M."/>
            <person name="Vergez L."/>
            <person name="Schmutz J."/>
            <person name="Larimer F."/>
            <person name="Land M."/>
            <person name="Hauser L."/>
            <person name="Kyrpides N."/>
            <person name="Kim E."/>
            <person name="Taghavi S."/>
            <person name="Newman L."/>
            <person name="Vangronsveld J."/>
            <person name="van der Lelie D."/>
            <person name="Richardson P."/>
        </authorList>
    </citation>
    <scope>NUCLEOTIDE SEQUENCE [LARGE SCALE GENOMIC DNA]</scope>
    <source>
        <strain>568</strain>
    </source>
</reference>
<name>LUXS_SERP5</name>
<evidence type="ECO:0000255" key="1">
    <source>
        <dbReference type="HAMAP-Rule" id="MF_00091"/>
    </source>
</evidence>
<accession>A8GA14</accession>
<dbReference type="EC" id="4.4.1.21" evidence="1"/>
<dbReference type="EMBL" id="CP000826">
    <property type="protein sequence ID" value="ABV39954.1"/>
    <property type="molecule type" value="Genomic_DNA"/>
</dbReference>
<dbReference type="SMR" id="A8GA14"/>
<dbReference type="STRING" id="399741.Spro_0848"/>
<dbReference type="KEGG" id="spe:Spro_0848"/>
<dbReference type="eggNOG" id="COG1854">
    <property type="taxonomic scope" value="Bacteria"/>
</dbReference>
<dbReference type="HOGENOM" id="CLU_107531_2_0_6"/>
<dbReference type="OrthoDB" id="9788129at2"/>
<dbReference type="GO" id="GO:0005506">
    <property type="term" value="F:iron ion binding"/>
    <property type="evidence" value="ECO:0007669"/>
    <property type="project" value="InterPro"/>
</dbReference>
<dbReference type="GO" id="GO:0043768">
    <property type="term" value="F:S-ribosylhomocysteine lyase activity"/>
    <property type="evidence" value="ECO:0007669"/>
    <property type="project" value="UniProtKB-UniRule"/>
</dbReference>
<dbReference type="GO" id="GO:0009372">
    <property type="term" value="P:quorum sensing"/>
    <property type="evidence" value="ECO:0007669"/>
    <property type="project" value="UniProtKB-UniRule"/>
</dbReference>
<dbReference type="FunFam" id="3.30.1360.80:FF:000001">
    <property type="entry name" value="S-ribosylhomocysteine lyase"/>
    <property type="match status" value="1"/>
</dbReference>
<dbReference type="Gene3D" id="3.30.1360.80">
    <property type="entry name" value="S-ribosylhomocysteinase (LuxS)"/>
    <property type="match status" value="1"/>
</dbReference>
<dbReference type="HAMAP" id="MF_00091">
    <property type="entry name" value="LuxS"/>
    <property type="match status" value="1"/>
</dbReference>
<dbReference type="InterPro" id="IPR037005">
    <property type="entry name" value="LuxS_sf"/>
</dbReference>
<dbReference type="InterPro" id="IPR011249">
    <property type="entry name" value="Metalloenz_LuxS/M16"/>
</dbReference>
<dbReference type="InterPro" id="IPR003815">
    <property type="entry name" value="S-ribosylhomocysteinase"/>
</dbReference>
<dbReference type="NCBIfam" id="NF002602">
    <property type="entry name" value="PRK02260.1-2"/>
    <property type="match status" value="1"/>
</dbReference>
<dbReference type="PANTHER" id="PTHR35799">
    <property type="entry name" value="S-RIBOSYLHOMOCYSTEINE LYASE"/>
    <property type="match status" value="1"/>
</dbReference>
<dbReference type="PANTHER" id="PTHR35799:SF1">
    <property type="entry name" value="S-RIBOSYLHOMOCYSTEINE LYASE"/>
    <property type="match status" value="1"/>
</dbReference>
<dbReference type="Pfam" id="PF02664">
    <property type="entry name" value="LuxS"/>
    <property type="match status" value="1"/>
</dbReference>
<dbReference type="PIRSF" id="PIRSF006160">
    <property type="entry name" value="AI2"/>
    <property type="match status" value="1"/>
</dbReference>
<dbReference type="PRINTS" id="PR01487">
    <property type="entry name" value="LUXSPROTEIN"/>
</dbReference>
<dbReference type="SUPFAM" id="SSF63411">
    <property type="entry name" value="LuxS/MPP-like metallohydrolase"/>
    <property type="match status" value="1"/>
</dbReference>
<organism>
    <name type="scientific">Serratia proteamaculans (strain 568)</name>
    <dbReference type="NCBI Taxonomy" id="399741"/>
    <lineage>
        <taxon>Bacteria</taxon>
        <taxon>Pseudomonadati</taxon>
        <taxon>Pseudomonadota</taxon>
        <taxon>Gammaproteobacteria</taxon>
        <taxon>Enterobacterales</taxon>
        <taxon>Yersiniaceae</taxon>
        <taxon>Serratia</taxon>
    </lineage>
</organism>